<keyword id="KW-0456">Lyase</keyword>
<keyword id="KW-0479">Metal-binding</keyword>
<keyword id="KW-0862">Zinc</keyword>
<comment type="function">
    <text evidence="1">Catalytic subunit of the tagatose-1,6-bisphosphate aldolase KbaYZ, which catalyzes the reversible aldol condensation of dihydroxyacetone phosphate (DHAP or glycerone-phosphate) with glyceraldehyde 3-phosphate (G3P) to produce tagatose 1,6-bisphosphate (TBP). Requires KbaZ subunit for full activity and stability.</text>
</comment>
<comment type="catalytic activity">
    <reaction evidence="1">
        <text>D-tagatofuranose 1,6-bisphosphate = D-glyceraldehyde 3-phosphate + dihydroxyacetone phosphate</text>
        <dbReference type="Rhea" id="RHEA:22948"/>
        <dbReference type="ChEBI" id="CHEBI:57642"/>
        <dbReference type="ChEBI" id="CHEBI:58694"/>
        <dbReference type="ChEBI" id="CHEBI:59776"/>
        <dbReference type="EC" id="4.1.2.40"/>
    </reaction>
</comment>
<comment type="cofactor">
    <cofactor evidence="1">
        <name>Zn(2+)</name>
        <dbReference type="ChEBI" id="CHEBI:29105"/>
    </cofactor>
    <text evidence="1">Binds 1 zinc ion per subunit.</text>
</comment>
<comment type="pathway">
    <text evidence="1">Carbohydrate metabolism; D-tagatose 6-phosphate degradation; D-glyceraldehyde 3-phosphate and glycerone phosphate from D-tagatose 6-phosphate: step 2/2.</text>
</comment>
<comment type="subunit">
    <text evidence="1">Homotetramer. Forms a complex with KbaZ.</text>
</comment>
<comment type="similarity">
    <text evidence="1">Belongs to the class II fructose-bisphosphate aldolase family. TagBP aldolase KbaY subfamily.</text>
</comment>
<name>KBAY_ECO81</name>
<evidence type="ECO:0000255" key="1">
    <source>
        <dbReference type="HAMAP-Rule" id="MF_01293"/>
    </source>
</evidence>
<dbReference type="EC" id="4.1.2.40" evidence="1"/>
<dbReference type="EMBL" id="CU928162">
    <property type="protein sequence ID" value="CAR09944.2"/>
    <property type="molecule type" value="Genomic_DNA"/>
</dbReference>
<dbReference type="RefSeq" id="WP_000022766.1">
    <property type="nucleotide sequence ID" value="NC_011745.1"/>
</dbReference>
<dbReference type="SMR" id="B7N0S6"/>
<dbReference type="GeneID" id="75203745"/>
<dbReference type="KEGG" id="ecq:ECED1_3801"/>
<dbReference type="HOGENOM" id="CLU_040088_0_1_6"/>
<dbReference type="UniPathway" id="UPA00704">
    <property type="reaction ID" value="UER00716"/>
</dbReference>
<dbReference type="Proteomes" id="UP000000748">
    <property type="component" value="Chromosome"/>
</dbReference>
<dbReference type="GO" id="GO:0005829">
    <property type="term" value="C:cytosol"/>
    <property type="evidence" value="ECO:0007669"/>
    <property type="project" value="TreeGrafter"/>
</dbReference>
<dbReference type="GO" id="GO:0009025">
    <property type="term" value="F:tagatose-bisphosphate aldolase activity"/>
    <property type="evidence" value="ECO:0007669"/>
    <property type="project" value="UniProtKB-UniRule"/>
</dbReference>
<dbReference type="GO" id="GO:0008270">
    <property type="term" value="F:zinc ion binding"/>
    <property type="evidence" value="ECO:0007669"/>
    <property type="project" value="UniProtKB-UniRule"/>
</dbReference>
<dbReference type="GO" id="GO:0005975">
    <property type="term" value="P:carbohydrate metabolic process"/>
    <property type="evidence" value="ECO:0007669"/>
    <property type="project" value="InterPro"/>
</dbReference>
<dbReference type="GO" id="GO:2001059">
    <property type="term" value="P:D-tagatose 6-phosphate catabolic process"/>
    <property type="evidence" value="ECO:0007669"/>
    <property type="project" value="UniProtKB-UniRule"/>
</dbReference>
<dbReference type="CDD" id="cd00453">
    <property type="entry name" value="FTBP_aldolase_II"/>
    <property type="match status" value="1"/>
</dbReference>
<dbReference type="FunFam" id="3.20.20.70:FF:000043">
    <property type="entry name" value="D-tagatose-1,6-bisphosphate aldolase subunit GatY"/>
    <property type="match status" value="1"/>
</dbReference>
<dbReference type="Gene3D" id="3.20.20.70">
    <property type="entry name" value="Aldolase class I"/>
    <property type="match status" value="1"/>
</dbReference>
<dbReference type="HAMAP" id="MF_01293">
    <property type="entry name" value="TagBP_aldolase_KbaY"/>
    <property type="match status" value="1"/>
</dbReference>
<dbReference type="InterPro" id="IPR013785">
    <property type="entry name" value="Aldolase_TIM"/>
</dbReference>
<dbReference type="InterPro" id="IPR050246">
    <property type="entry name" value="Class_II_FBP_aldolase"/>
</dbReference>
<dbReference type="InterPro" id="IPR000771">
    <property type="entry name" value="FBA_II"/>
</dbReference>
<dbReference type="InterPro" id="IPR023788">
    <property type="entry name" value="TagBP_ald_KbaY"/>
</dbReference>
<dbReference type="InterPro" id="IPR011288">
    <property type="entry name" value="TagBP_ald_KbaY/GatY"/>
</dbReference>
<dbReference type="NCBIfam" id="TIGR00167">
    <property type="entry name" value="cbbA"/>
    <property type="match status" value="1"/>
</dbReference>
<dbReference type="NCBIfam" id="NF006626">
    <property type="entry name" value="PRK09195.1"/>
    <property type="match status" value="1"/>
</dbReference>
<dbReference type="NCBIfam" id="NF009374">
    <property type="entry name" value="PRK12737.1"/>
    <property type="match status" value="1"/>
</dbReference>
<dbReference type="NCBIfam" id="NF009375">
    <property type="entry name" value="PRK12738.1"/>
    <property type="match status" value="1"/>
</dbReference>
<dbReference type="NCBIfam" id="TIGR01858">
    <property type="entry name" value="tag_bisphos_ald"/>
    <property type="match status" value="1"/>
</dbReference>
<dbReference type="PANTHER" id="PTHR30304">
    <property type="entry name" value="D-TAGATOSE-1,6-BISPHOSPHATE ALDOLASE"/>
    <property type="match status" value="1"/>
</dbReference>
<dbReference type="PANTHER" id="PTHR30304:SF0">
    <property type="entry name" value="D-TAGATOSE-1,6-BISPHOSPHATE ALDOLASE SUBUNIT GATY-RELATED"/>
    <property type="match status" value="1"/>
</dbReference>
<dbReference type="Pfam" id="PF01116">
    <property type="entry name" value="F_bP_aldolase"/>
    <property type="match status" value="1"/>
</dbReference>
<dbReference type="PIRSF" id="PIRSF001359">
    <property type="entry name" value="F_bP_aldolase_II"/>
    <property type="match status" value="1"/>
</dbReference>
<dbReference type="SUPFAM" id="SSF51569">
    <property type="entry name" value="Aldolase"/>
    <property type="match status" value="1"/>
</dbReference>
<dbReference type="PROSITE" id="PS00602">
    <property type="entry name" value="ALDOLASE_CLASS_II_1"/>
    <property type="match status" value="1"/>
</dbReference>
<dbReference type="PROSITE" id="PS00806">
    <property type="entry name" value="ALDOLASE_CLASS_II_2"/>
    <property type="match status" value="1"/>
</dbReference>
<reference key="1">
    <citation type="journal article" date="2009" name="PLoS Genet.">
        <title>Organised genome dynamics in the Escherichia coli species results in highly diverse adaptive paths.</title>
        <authorList>
            <person name="Touchon M."/>
            <person name="Hoede C."/>
            <person name="Tenaillon O."/>
            <person name="Barbe V."/>
            <person name="Baeriswyl S."/>
            <person name="Bidet P."/>
            <person name="Bingen E."/>
            <person name="Bonacorsi S."/>
            <person name="Bouchier C."/>
            <person name="Bouvet O."/>
            <person name="Calteau A."/>
            <person name="Chiapello H."/>
            <person name="Clermont O."/>
            <person name="Cruveiller S."/>
            <person name="Danchin A."/>
            <person name="Diard M."/>
            <person name="Dossat C."/>
            <person name="Karoui M.E."/>
            <person name="Frapy E."/>
            <person name="Garry L."/>
            <person name="Ghigo J.M."/>
            <person name="Gilles A.M."/>
            <person name="Johnson J."/>
            <person name="Le Bouguenec C."/>
            <person name="Lescat M."/>
            <person name="Mangenot S."/>
            <person name="Martinez-Jehanne V."/>
            <person name="Matic I."/>
            <person name="Nassif X."/>
            <person name="Oztas S."/>
            <person name="Petit M.A."/>
            <person name="Pichon C."/>
            <person name="Rouy Z."/>
            <person name="Ruf C.S."/>
            <person name="Schneider D."/>
            <person name="Tourret J."/>
            <person name="Vacherie B."/>
            <person name="Vallenet D."/>
            <person name="Medigue C."/>
            <person name="Rocha E.P.C."/>
            <person name="Denamur E."/>
        </authorList>
    </citation>
    <scope>NUCLEOTIDE SEQUENCE [LARGE SCALE GENOMIC DNA]</scope>
    <source>
        <strain>ED1a</strain>
    </source>
</reference>
<gene>
    <name evidence="1" type="primary">kbaY</name>
    <name type="ordered locus">ECED1_3801</name>
</gene>
<feature type="chain" id="PRO_1000165277" description="D-tagatose-1,6-bisphosphate aldolase subunit KbaY">
    <location>
        <begin position="1"/>
        <end position="286"/>
    </location>
</feature>
<feature type="active site" description="Proton donor" evidence="1">
    <location>
        <position position="82"/>
    </location>
</feature>
<feature type="binding site" evidence="1">
    <location>
        <position position="83"/>
    </location>
    <ligand>
        <name>Zn(2+)</name>
        <dbReference type="ChEBI" id="CHEBI:29105"/>
        <note>catalytic</note>
    </ligand>
</feature>
<feature type="binding site" evidence="1">
    <location>
        <position position="180"/>
    </location>
    <ligand>
        <name>Zn(2+)</name>
        <dbReference type="ChEBI" id="CHEBI:29105"/>
        <note>catalytic</note>
    </ligand>
</feature>
<feature type="binding site" evidence="1">
    <location>
        <position position="181"/>
    </location>
    <ligand>
        <name>dihydroxyacetone phosphate</name>
        <dbReference type="ChEBI" id="CHEBI:57642"/>
    </ligand>
</feature>
<feature type="binding site" evidence="1">
    <location>
        <position position="208"/>
    </location>
    <ligand>
        <name>Zn(2+)</name>
        <dbReference type="ChEBI" id="CHEBI:29105"/>
        <note>catalytic</note>
    </ligand>
</feature>
<feature type="binding site" evidence="1">
    <location>
        <begin position="209"/>
        <end position="211"/>
    </location>
    <ligand>
        <name>dihydroxyacetone phosphate</name>
        <dbReference type="ChEBI" id="CHEBI:57642"/>
    </ligand>
</feature>
<feature type="binding site" evidence="1">
    <location>
        <begin position="230"/>
        <end position="233"/>
    </location>
    <ligand>
        <name>dihydroxyacetone phosphate</name>
        <dbReference type="ChEBI" id="CHEBI:57642"/>
    </ligand>
</feature>
<organism>
    <name type="scientific">Escherichia coli O81 (strain ED1a)</name>
    <dbReference type="NCBI Taxonomy" id="585397"/>
    <lineage>
        <taxon>Bacteria</taxon>
        <taxon>Pseudomonadati</taxon>
        <taxon>Pseudomonadota</taxon>
        <taxon>Gammaproteobacteria</taxon>
        <taxon>Enterobacterales</taxon>
        <taxon>Enterobacteriaceae</taxon>
        <taxon>Escherichia</taxon>
    </lineage>
</organism>
<proteinExistence type="inferred from homology"/>
<protein>
    <recommendedName>
        <fullName evidence="1">D-tagatose-1,6-bisphosphate aldolase subunit KbaY</fullName>
        <shortName evidence="1">TBPA</shortName>
        <shortName evidence="1">TagBP aldolase</shortName>
        <ecNumber evidence="1">4.1.2.40</ecNumber>
    </recommendedName>
    <alternativeName>
        <fullName evidence="1">D-tagatose-bisphosphate aldolase class II</fullName>
    </alternativeName>
    <alternativeName>
        <fullName evidence="1">Ketose 1,6-bisphosphate aldolase class II</fullName>
    </alternativeName>
    <alternativeName>
        <fullName evidence="1">Tagatose-bisphosphate aldolase</fullName>
    </alternativeName>
</protein>
<sequence length="286" mass="31294">MSIISTKYLLQDAQANGYAVPAFNIHNAETIQAILEVCSEMRSPVILAGTPGTFKHIALEEIYALCSAYSTTYNMPLALHLDHHESLDDIRRKVHAGVRSAMIDGSHFPFAENVKLVKSVVDFCHSQDCSVEAELGRLGGVEDDMSVDAESAFLTDPQEAKRFVELTGVDSLAVAIGTAHGLYSKTPKIDFQRLAEIREVVDVPLVLHGASDVPDEFVRRTIELGVTKVNVATELKIAFAGAVKAWFAENPQGNDPRYYMRVGMDAMKEVVRNKINVCGSANRISA</sequence>
<accession>B7N0S6</accession>